<protein>
    <recommendedName>
        <fullName evidence="1">Small ribosomal subunit protein uS11</fullName>
    </recommendedName>
    <alternativeName>
        <fullName evidence="2">30S ribosomal protein S11</fullName>
    </alternativeName>
</protein>
<name>RS11_CAUSK</name>
<feature type="chain" id="PRO_1000086181" description="Small ribosomal subunit protein uS11">
    <location>
        <begin position="1"/>
        <end position="129"/>
    </location>
</feature>
<gene>
    <name evidence="1" type="primary">rpsK</name>
    <name type="ordered locus">Caul_1637</name>
</gene>
<dbReference type="EMBL" id="CP000927">
    <property type="protein sequence ID" value="ABZ70766.1"/>
    <property type="molecule type" value="Genomic_DNA"/>
</dbReference>
<dbReference type="SMR" id="B0T2E5"/>
<dbReference type="STRING" id="366602.Caul_1637"/>
<dbReference type="KEGG" id="cak:Caul_1637"/>
<dbReference type="eggNOG" id="COG0100">
    <property type="taxonomic scope" value="Bacteria"/>
</dbReference>
<dbReference type="HOGENOM" id="CLU_072439_5_0_5"/>
<dbReference type="OrthoDB" id="9806415at2"/>
<dbReference type="GO" id="GO:1990904">
    <property type="term" value="C:ribonucleoprotein complex"/>
    <property type="evidence" value="ECO:0007669"/>
    <property type="project" value="UniProtKB-KW"/>
</dbReference>
<dbReference type="GO" id="GO:0005840">
    <property type="term" value="C:ribosome"/>
    <property type="evidence" value="ECO:0007669"/>
    <property type="project" value="UniProtKB-KW"/>
</dbReference>
<dbReference type="GO" id="GO:0019843">
    <property type="term" value="F:rRNA binding"/>
    <property type="evidence" value="ECO:0007669"/>
    <property type="project" value="UniProtKB-UniRule"/>
</dbReference>
<dbReference type="GO" id="GO:0003735">
    <property type="term" value="F:structural constituent of ribosome"/>
    <property type="evidence" value="ECO:0007669"/>
    <property type="project" value="InterPro"/>
</dbReference>
<dbReference type="GO" id="GO:0006412">
    <property type="term" value="P:translation"/>
    <property type="evidence" value="ECO:0007669"/>
    <property type="project" value="UniProtKB-UniRule"/>
</dbReference>
<dbReference type="FunFam" id="3.30.420.80:FF:000001">
    <property type="entry name" value="30S ribosomal protein S11"/>
    <property type="match status" value="1"/>
</dbReference>
<dbReference type="Gene3D" id="3.30.420.80">
    <property type="entry name" value="Ribosomal protein S11"/>
    <property type="match status" value="1"/>
</dbReference>
<dbReference type="HAMAP" id="MF_01310">
    <property type="entry name" value="Ribosomal_uS11"/>
    <property type="match status" value="1"/>
</dbReference>
<dbReference type="InterPro" id="IPR001971">
    <property type="entry name" value="Ribosomal_uS11"/>
</dbReference>
<dbReference type="InterPro" id="IPR019981">
    <property type="entry name" value="Ribosomal_uS11_bac-type"/>
</dbReference>
<dbReference type="InterPro" id="IPR018102">
    <property type="entry name" value="Ribosomal_uS11_CS"/>
</dbReference>
<dbReference type="InterPro" id="IPR036967">
    <property type="entry name" value="Ribosomal_uS11_sf"/>
</dbReference>
<dbReference type="NCBIfam" id="NF003698">
    <property type="entry name" value="PRK05309.1"/>
    <property type="match status" value="1"/>
</dbReference>
<dbReference type="NCBIfam" id="TIGR03632">
    <property type="entry name" value="uS11_bact"/>
    <property type="match status" value="1"/>
</dbReference>
<dbReference type="PANTHER" id="PTHR11759">
    <property type="entry name" value="40S RIBOSOMAL PROTEIN S14/30S RIBOSOMAL PROTEIN S11"/>
    <property type="match status" value="1"/>
</dbReference>
<dbReference type="Pfam" id="PF00411">
    <property type="entry name" value="Ribosomal_S11"/>
    <property type="match status" value="1"/>
</dbReference>
<dbReference type="PIRSF" id="PIRSF002131">
    <property type="entry name" value="Ribosomal_S11"/>
    <property type="match status" value="1"/>
</dbReference>
<dbReference type="SUPFAM" id="SSF53137">
    <property type="entry name" value="Translational machinery components"/>
    <property type="match status" value="1"/>
</dbReference>
<dbReference type="PROSITE" id="PS00054">
    <property type="entry name" value="RIBOSOMAL_S11"/>
    <property type="match status" value="1"/>
</dbReference>
<keyword id="KW-0687">Ribonucleoprotein</keyword>
<keyword id="KW-0689">Ribosomal protein</keyword>
<keyword id="KW-0694">RNA-binding</keyword>
<keyword id="KW-0699">rRNA-binding</keyword>
<organism>
    <name type="scientific">Caulobacter sp. (strain K31)</name>
    <dbReference type="NCBI Taxonomy" id="366602"/>
    <lineage>
        <taxon>Bacteria</taxon>
        <taxon>Pseudomonadati</taxon>
        <taxon>Pseudomonadota</taxon>
        <taxon>Alphaproteobacteria</taxon>
        <taxon>Caulobacterales</taxon>
        <taxon>Caulobacteraceae</taxon>
        <taxon>Caulobacter</taxon>
    </lineage>
</organism>
<sequence length="129" mass="13687">MAKEPARVKKRERKNITSGVAHVNASFNNTMITITDAQGNTISWSSAGAMGFKGSRKSTPYAAQMAAEDAGKKAAEHGVKTLEVNVSGPGSGRESALRALQAAGMTITTIRDVTPIPHNGCRPPKRRRV</sequence>
<evidence type="ECO:0000255" key="1">
    <source>
        <dbReference type="HAMAP-Rule" id="MF_01310"/>
    </source>
</evidence>
<evidence type="ECO:0000305" key="2"/>
<proteinExistence type="inferred from homology"/>
<accession>B0T2E5</accession>
<comment type="function">
    <text evidence="1">Located on the platform of the 30S subunit, it bridges several disparate RNA helices of the 16S rRNA. Forms part of the Shine-Dalgarno cleft in the 70S ribosome.</text>
</comment>
<comment type="subunit">
    <text evidence="1">Part of the 30S ribosomal subunit. Interacts with proteins S7 and S18. Binds to IF-3.</text>
</comment>
<comment type="similarity">
    <text evidence="1">Belongs to the universal ribosomal protein uS11 family.</text>
</comment>
<reference key="1">
    <citation type="submission" date="2008-01" db="EMBL/GenBank/DDBJ databases">
        <title>Complete sequence of chromosome of Caulobacter sp. K31.</title>
        <authorList>
            <consortium name="US DOE Joint Genome Institute"/>
            <person name="Copeland A."/>
            <person name="Lucas S."/>
            <person name="Lapidus A."/>
            <person name="Barry K."/>
            <person name="Glavina del Rio T."/>
            <person name="Dalin E."/>
            <person name="Tice H."/>
            <person name="Pitluck S."/>
            <person name="Bruce D."/>
            <person name="Goodwin L."/>
            <person name="Thompson L.S."/>
            <person name="Brettin T."/>
            <person name="Detter J.C."/>
            <person name="Han C."/>
            <person name="Schmutz J."/>
            <person name="Larimer F."/>
            <person name="Land M."/>
            <person name="Hauser L."/>
            <person name="Kyrpides N."/>
            <person name="Kim E."/>
            <person name="Stephens C."/>
            <person name="Richardson P."/>
        </authorList>
    </citation>
    <scope>NUCLEOTIDE SEQUENCE [LARGE SCALE GENOMIC DNA]</scope>
    <source>
        <strain>K31</strain>
    </source>
</reference>